<reference key="1">
    <citation type="journal article" date="2011" name="Stand. Genomic Sci.">
        <title>Complete genome sequence of the halophilic and highly halotolerant Chromohalobacter salexigens type strain (1H11(T)).</title>
        <authorList>
            <person name="Copeland A."/>
            <person name="O'Connor K."/>
            <person name="Lucas S."/>
            <person name="Lapidus A."/>
            <person name="Berry K.W."/>
            <person name="Detter J.C."/>
            <person name="Del Rio T.G."/>
            <person name="Hammon N."/>
            <person name="Dalin E."/>
            <person name="Tice H."/>
            <person name="Pitluck S."/>
            <person name="Bruce D."/>
            <person name="Goodwin L."/>
            <person name="Han C."/>
            <person name="Tapia R."/>
            <person name="Saunders E."/>
            <person name="Schmutz J."/>
            <person name="Brettin T."/>
            <person name="Larimer F."/>
            <person name="Land M."/>
            <person name="Hauser L."/>
            <person name="Vargas C."/>
            <person name="Nieto J.J."/>
            <person name="Kyrpides N.C."/>
            <person name="Ivanova N."/>
            <person name="Goker M."/>
            <person name="Klenk H.P."/>
            <person name="Csonka L.N."/>
            <person name="Woyke T."/>
        </authorList>
    </citation>
    <scope>NUCLEOTIDE SEQUENCE [LARGE SCALE GENOMIC DNA]</scope>
    <source>
        <strain>ATCC BAA-138 / DSM 3043 / CIP 106854 / NCIMB 13768 / 1H11</strain>
    </source>
</reference>
<dbReference type="EC" id="3.6.1.54" evidence="1"/>
<dbReference type="EMBL" id="CP000285">
    <property type="protein sequence ID" value="ABE59405.1"/>
    <property type="molecule type" value="Genomic_DNA"/>
</dbReference>
<dbReference type="RefSeq" id="WP_011507351.1">
    <property type="nucleotide sequence ID" value="NC_007963.1"/>
</dbReference>
<dbReference type="SMR" id="Q1QVV3"/>
<dbReference type="STRING" id="290398.Csal_2054"/>
<dbReference type="GeneID" id="95334769"/>
<dbReference type="KEGG" id="csa:Csal_2054"/>
<dbReference type="eggNOG" id="COG2908">
    <property type="taxonomic scope" value="Bacteria"/>
</dbReference>
<dbReference type="HOGENOM" id="CLU_074586_0_0_6"/>
<dbReference type="OrthoDB" id="9783283at2"/>
<dbReference type="UniPathway" id="UPA00359">
    <property type="reaction ID" value="UER00480"/>
</dbReference>
<dbReference type="Proteomes" id="UP000000239">
    <property type="component" value="Chromosome"/>
</dbReference>
<dbReference type="GO" id="GO:0005737">
    <property type="term" value="C:cytoplasm"/>
    <property type="evidence" value="ECO:0007669"/>
    <property type="project" value="InterPro"/>
</dbReference>
<dbReference type="GO" id="GO:0019897">
    <property type="term" value="C:extrinsic component of plasma membrane"/>
    <property type="evidence" value="ECO:0007669"/>
    <property type="project" value="UniProtKB-UniRule"/>
</dbReference>
<dbReference type="GO" id="GO:0030145">
    <property type="term" value="F:manganese ion binding"/>
    <property type="evidence" value="ECO:0007669"/>
    <property type="project" value="UniProtKB-UniRule"/>
</dbReference>
<dbReference type="GO" id="GO:0008758">
    <property type="term" value="F:UDP-2,3-diacylglucosamine hydrolase activity"/>
    <property type="evidence" value="ECO:0007669"/>
    <property type="project" value="UniProtKB-UniRule"/>
</dbReference>
<dbReference type="GO" id="GO:0009245">
    <property type="term" value="P:lipid A biosynthetic process"/>
    <property type="evidence" value="ECO:0007669"/>
    <property type="project" value="UniProtKB-UniRule"/>
</dbReference>
<dbReference type="CDD" id="cd07398">
    <property type="entry name" value="MPP_YbbF-LpxH"/>
    <property type="match status" value="1"/>
</dbReference>
<dbReference type="Gene3D" id="3.60.21.10">
    <property type="match status" value="1"/>
</dbReference>
<dbReference type="HAMAP" id="MF_00575">
    <property type="entry name" value="LpxH"/>
    <property type="match status" value="1"/>
</dbReference>
<dbReference type="InterPro" id="IPR004843">
    <property type="entry name" value="Calcineurin-like_PHP_ApaH"/>
</dbReference>
<dbReference type="InterPro" id="IPR043461">
    <property type="entry name" value="LpxH-like"/>
</dbReference>
<dbReference type="InterPro" id="IPR029052">
    <property type="entry name" value="Metallo-depent_PP-like"/>
</dbReference>
<dbReference type="InterPro" id="IPR010138">
    <property type="entry name" value="UDP-diacylglucosamine_Hdrlase"/>
</dbReference>
<dbReference type="NCBIfam" id="TIGR01854">
    <property type="entry name" value="lipid_A_lpxH"/>
    <property type="match status" value="1"/>
</dbReference>
<dbReference type="NCBIfam" id="NF003743">
    <property type="entry name" value="PRK05340.1"/>
    <property type="match status" value="1"/>
</dbReference>
<dbReference type="PANTHER" id="PTHR34990:SF1">
    <property type="entry name" value="UDP-2,3-DIACYLGLUCOSAMINE HYDROLASE"/>
    <property type="match status" value="1"/>
</dbReference>
<dbReference type="PANTHER" id="PTHR34990">
    <property type="entry name" value="UDP-2,3-DIACYLGLUCOSAMINE HYDROLASE-RELATED"/>
    <property type="match status" value="1"/>
</dbReference>
<dbReference type="Pfam" id="PF00149">
    <property type="entry name" value="Metallophos"/>
    <property type="match status" value="1"/>
</dbReference>
<dbReference type="SUPFAM" id="SSF56300">
    <property type="entry name" value="Metallo-dependent phosphatases"/>
    <property type="match status" value="1"/>
</dbReference>
<feature type="chain" id="PRO_1000025049" description="UDP-2,3-diacylglucosamine hydrolase">
    <location>
        <begin position="1"/>
        <end position="246"/>
    </location>
</feature>
<feature type="binding site" evidence="1">
    <location>
        <position position="8"/>
    </location>
    <ligand>
        <name>Mn(2+)</name>
        <dbReference type="ChEBI" id="CHEBI:29035"/>
        <label>1</label>
    </ligand>
</feature>
<feature type="binding site" evidence="1">
    <location>
        <position position="10"/>
    </location>
    <ligand>
        <name>Mn(2+)</name>
        <dbReference type="ChEBI" id="CHEBI:29035"/>
        <label>1</label>
    </ligand>
</feature>
<feature type="binding site" evidence="1">
    <location>
        <position position="41"/>
    </location>
    <ligand>
        <name>Mn(2+)</name>
        <dbReference type="ChEBI" id="CHEBI:29035"/>
        <label>1</label>
    </ligand>
</feature>
<feature type="binding site" evidence="1">
    <location>
        <position position="41"/>
    </location>
    <ligand>
        <name>Mn(2+)</name>
        <dbReference type="ChEBI" id="CHEBI:29035"/>
        <label>2</label>
    </ligand>
</feature>
<feature type="binding site" evidence="1">
    <location>
        <begin position="79"/>
        <end position="80"/>
    </location>
    <ligand>
        <name>substrate</name>
    </ligand>
</feature>
<feature type="binding site" evidence="1">
    <location>
        <position position="79"/>
    </location>
    <ligand>
        <name>Mn(2+)</name>
        <dbReference type="ChEBI" id="CHEBI:29035"/>
        <label>2</label>
    </ligand>
</feature>
<feature type="binding site" evidence="1">
    <location>
        <position position="114"/>
    </location>
    <ligand>
        <name>Mn(2+)</name>
        <dbReference type="ChEBI" id="CHEBI:29035"/>
        <label>2</label>
    </ligand>
</feature>
<feature type="binding site" evidence="1">
    <location>
        <position position="122"/>
    </location>
    <ligand>
        <name>substrate</name>
    </ligand>
</feature>
<feature type="binding site" evidence="1">
    <location>
        <position position="160"/>
    </location>
    <ligand>
        <name>substrate</name>
    </ligand>
</feature>
<feature type="binding site" evidence="1">
    <location>
        <position position="164"/>
    </location>
    <ligand>
        <name>substrate</name>
    </ligand>
</feature>
<feature type="binding site" evidence="1">
    <location>
        <position position="167"/>
    </location>
    <ligand>
        <name>substrate</name>
    </ligand>
</feature>
<feature type="binding site" evidence="1">
    <location>
        <position position="195"/>
    </location>
    <ligand>
        <name>Mn(2+)</name>
        <dbReference type="ChEBI" id="CHEBI:29035"/>
        <label>2</label>
    </ligand>
</feature>
<feature type="binding site" evidence="1">
    <location>
        <position position="195"/>
    </location>
    <ligand>
        <name>substrate</name>
    </ligand>
</feature>
<feature type="binding site" evidence="1">
    <location>
        <position position="197"/>
    </location>
    <ligand>
        <name>Mn(2+)</name>
        <dbReference type="ChEBI" id="CHEBI:29035"/>
        <label>1</label>
    </ligand>
</feature>
<gene>
    <name evidence="1" type="primary">lpxH</name>
    <name type="ordered locus">Csal_2054</name>
</gene>
<keyword id="KW-0997">Cell inner membrane</keyword>
<keyword id="KW-1003">Cell membrane</keyword>
<keyword id="KW-0378">Hydrolase</keyword>
<keyword id="KW-0441">Lipid A biosynthesis</keyword>
<keyword id="KW-0444">Lipid biosynthesis</keyword>
<keyword id="KW-0443">Lipid metabolism</keyword>
<keyword id="KW-0464">Manganese</keyword>
<keyword id="KW-0472">Membrane</keyword>
<keyword id="KW-0479">Metal-binding</keyword>
<keyword id="KW-1185">Reference proteome</keyword>
<proteinExistence type="inferred from homology"/>
<comment type="function">
    <text evidence="1">Hydrolyzes the pyrophosphate bond of UDP-2,3-diacylglucosamine to yield 2,3-diacylglucosamine 1-phosphate (lipid X) and UMP by catalyzing the attack of water at the alpha-P atom. Involved in the biosynthesis of lipid A, a phosphorylated glycolipid that anchors the lipopolysaccharide to the outer membrane of the cell.</text>
</comment>
<comment type="catalytic activity">
    <reaction evidence="1">
        <text>UDP-2-N,3-O-bis[(3R)-3-hydroxytetradecanoyl]-alpha-D-glucosamine + H2O = 2-N,3-O-bis[(3R)-3-hydroxytetradecanoyl]-alpha-D-glucosaminyl 1-phosphate + UMP + 2 H(+)</text>
        <dbReference type="Rhea" id="RHEA:25213"/>
        <dbReference type="ChEBI" id="CHEBI:15377"/>
        <dbReference type="ChEBI" id="CHEBI:15378"/>
        <dbReference type="ChEBI" id="CHEBI:57865"/>
        <dbReference type="ChEBI" id="CHEBI:57957"/>
        <dbReference type="ChEBI" id="CHEBI:78847"/>
        <dbReference type="EC" id="3.6.1.54"/>
    </reaction>
</comment>
<comment type="cofactor">
    <cofactor evidence="1">
        <name>Mn(2+)</name>
        <dbReference type="ChEBI" id="CHEBI:29035"/>
    </cofactor>
    <text evidence="1">Binds 2 Mn(2+) ions per subunit in a binuclear metal center.</text>
</comment>
<comment type="pathway">
    <text evidence="1">Glycolipid biosynthesis; lipid IV(A) biosynthesis; lipid IV(A) from (3R)-3-hydroxytetradecanoyl-[acyl-carrier-protein] and UDP-N-acetyl-alpha-D-glucosamine: step 4/6.</text>
</comment>
<comment type="subcellular location">
    <subcellularLocation>
        <location evidence="1">Cell inner membrane</location>
        <topology evidence="1">Peripheral membrane protein</topology>
        <orientation evidence="1">Cytoplasmic side</orientation>
    </subcellularLocation>
</comment>
<comment type="similarity">
    <text evidence="1">Belongs to the LpxH family.</text>
</comment>
<organism>
    <name type="scientific">Chromohalobacter salexigens (strain ATCC BAA-138 / DSM 3043 / CIP 106854 / NCIMB 13768 / 1H11)</name>
    <dbReference type="NCBI Taxonomy" id="290398"/>
    <lineage>
        <taxon>Bacteria</taxon>
        <taxon>Pseudomonadati</taxon>
        <taxon>Pseudomonadota</taxon>
        <taxon>Gammaproteobacteria</taxon>
        <taxon>Oceanospirillales</taxon>
        <taxon>Halomonadaceae</taxon>
        <taxon>Chromohalobacter</taxon>
    </lineage>
</organism>
<accession>Q1QVV3</accession>
<sequence length="246" mass="27705">MTTLLISDLHLHTGQPDITRGFLDYLERDARHADTLYLLGDIFEAWIGDDYLGDLERQVIEALRRLSDAGTQLYFMHGNRDFLVGEDFAAAAGATLLDDPCLATLGRQTVLLMHGDSLCTGDEEYMKFRAMARDPEWQAQILALPIEQRLELAKSLRMQSSDANTQKADAIMDVTPAEVEAIMREHGVSTLIHGHTHRPAVHEFTLDGQPAQRIVLGDWRPGRGWEVRVEDDAPPRLREFAFQARA</sequence>
<name>LPXH_CHRSD</name>
<evidence type="ECO:0000255" key="1">
    <source>
        <dbReference type="HAMAP-Rule" id="MF_00575"/>
    </source>
</evidence>
<protein>
    <recommendedName>
        <fullName evidence="1">UDP-2,3-diacylglucosamine hydrolase</fullName>
        <ecNumber evidence="1">3.6.1.54</ecNumber>
    </recommendedName>
    <alternativeName>
        <fullName evidence="1">UDP-2,3-diacylglucosamine diphosphatase</fullName>
    </alternativeName>
</protein>